<dbReference type="EC" id="5.4.3.8" evidence="1"/>
<dbReference type="EMBL" id="AM233362">
    <property type="protein sequence ID" value="CAJ79722.1"/>
    <property type="molecule type" value="Genomic_DNA"/>
</dbReference>
<dbReference type="RefSeq" id="WP_003016437.1">
    <property type="nucleotide sequence ID" value="NZ_CP009694.1"/>
</dbReference>
<dbReference type="SMR" id="Q2A2U8"/>
<dbReference type="KEGG" id="ftl:FTL_1283"/>
<dbReference type="UniPathway" id="UPA00251">
    <property type="reaction ID" value="UER00317"/>
</dbReference>
<dbReference type="Proteomes" id="UP000001944">
    <property type="component" value="Chromosome"/>
</dbReference>
<dbReference type="GO" id="GO:0005737">
    <property type="term" value="C:cytoplasm"/>
    <property type="evidence" value="ECO:0007669"/>
    <property type="project" value="UniProtKB-SubCell"/>
</dbReference>
<dbReference type="GO" id="GO:0042286">
    <property type="term" value="F:glutamate-1-semialdehyde 2,1-aminomutase activity"/>
    <property type="evidence" value="ECO:0007669"/>
    <property type="project" value="UniProtKB-UniRule"/>
</dbReference>
<dbReference type="GO" id="GO:0030170">
    <property type="term" value="F:pyridoxal phosphate binding"/>
    <property type="evidence" value="ECO:0007669"/>
    <property type="project" value="InterPro"/>
</dbReference>
<dbReference type="GO" id="GO:0008483">
    <property type="term" value="F:transaminase activity"/>
    <property type="evidence" value="ECO:0007669"/>
    <property type="project" value="InterPro"/>
</dbReference>
<dbReference type="GO" id="GO:0006782">
    <property type="term" value="P:protoporphyrinogen IX biosynthetic process"/>
    <property type="evidence" value="ECO:0007669"/>
    <property type="project" value="UniProtKB-UniRule"/>
</dbReference>
<dbReference type="CDD" id="cd00610">
    <property type="entry name" value="OAT_like"/>
    <property type="match status" value="1"/>
</dbReference>
<dbReference type="FunFam" id="3.40.640.10:FF:000021">
    <property type="entry name" value="Glutamate-1-semialdehyde 2,1-aminomutase"/>
    <property type="match status" value="1"/>
</dbReference>
<dbReference type="Gene3D" id="3.90.1150.10">
    <property type="entry name" value="Aspartate Aminotransferase, domain 1"/>
    <property type="match status" value="1"/>
</dbReference>
<dbReference type="Gene3D" id="3.40.640.10">
    <property type="entry name" value="Type I PLP-dependent aspartate aminotransferase-like (Major domain)"/>
    <property type="match status" value="1"/>
</dbReference>
<dbReference type="HAMAP" id="MF_00375">
    <property type="entry name" value="HemL_aminotrans_3"/>
    <property type="match status" value="1"/>
</dbReference>
<dbReference type="InterPro" id="IPR004639">
    <property type="entry name" value="4pyrrol_synth_GluAld_NH2Trfase"/>
</dbReference>
<dbReference type="InterPro" id="IPR005814">
    <property type="entry name" value="Aminotrans_3"/>
</dbReference>
<dbReference type="InterPro" id="IPR049704">
    <property type="entry name" value="Aminotrans_3_PPA_site"/>
</dbReference>
<dbReference type="InterPro" id="IPR015424">
    <property type="entry name" value="PyrdxlP-dep_Trfase"/>
</dbReference>
<dbReference type="InterPro" id="IPR015421">
    <property type="entry name" value="PyrdxlP-dep_Trfase_major"/>
</dbReference>
<dbReference type="InterPro" id="IPR015422">
    <property type="entry name" value="PyrdxlP-dep_Trfase_small"/>
</dbReference>
<dbReference type="NCBIfam" id="TIGR00713">
    <property type="entry name" value="hemL"/>
    <property type="match status" value="1"/>
</dbReference>
<dbReference type="NCBIfam" id="NF000818">
    <property type="entry name" value="PRK00062.1"/>
    <property type="match status" value="1"/>
</dbReference>
<dbReference type="PANTHER" id="PTHR43713">
    <property type="entry name" value="GLUTAMATE-1-SEMIALDEHYDE 2,1-AMINOMUTASE"/>
    <property type="match status" value="1"/>
</dbReference>
<dbReference type="PANTHER" id="PTHR43713:SF3">
    <property type="entry name" value="GLUTAMATE-1-SEMIALDEHYDE 2,1-AMINOMUTASE 1, CHLOROPLASTIC-RELATED"/>
    <property type="match status" value="1"/>
</dbReference>
<dbReference type="Pfam" id="PF00202">
    <property type="entry name" value="Aminotran_3"/>
    <property type="match status" value="1"/>
</dbReference>
<dbReference type="SUPFAM" id="SSF53383">
    <property type="entry name" value="PLP-dependent transferases"/>
    <property type="match status" value="1"/>
</dbReference>
<dbReference type="PROSITE" id="PS00600">
    <property type="entry name" value="AA_TRANSFER_CLASS_3"/>
    <property type="match status" value="1"/>
</dbReference>
<feature type="chain" id="PRO_0000300911" description="Glutamate-1-semialdehyde 2,1-aminomutase">
    <location>
        <begin position="1"/>
        <end position="431"/>
    </location>
</feature>
<feature type="modified residue" description="N6-(pyridoxal phosphate)lysine" evidence="1">
    <location>
        <position position="269"/>
    </location>
</feature>
<comment type="catalytic activity">
    <reaction evidence="1">
        <text>(S)-4-amino-5-oxopentanoate = 5-aminolevulinate</text>
        <dbReference type="Rhea" id="RHEA:14265"/>
        <dbReference type="ChEBI" id="CHEBI:57501"/>
        <dbReference type="ChEBI" id="CHEBI:356416"/>
        <dbReference type="EC" id="5.4.3.8"/>
    </reaction>
</comment>
<comment type="cofactor">
    <cofactor evidence="1">
        <name>pyridoxal 5'-phosphate</name>
        <dbReference type="ChEBI" id="CHEBI:597326"/>
    </cofactor>
</comment>
<comment type="pathway">
    <text evidence="1">Porphyrin-containing compound metabolism; protoporphyrin-IX biosynthesis; 5-aminolevulinate from L-glutamyl-tRNA(Glu): step 2/2.</text>
</comment>
<comment type="subunit">
    <text evidence="1">Homodimer.</text>
</comment>
<comment type="subcellular location">
    <subcellularLocation>
        <location evidence="1">Cytoplasm</location>
    </subcellularLocation>
</comment>
<comment type="similarity">
    <text evidence="1">Belongs to the class-III pyridoxal-phosphate-dependent aminotransferase family. HemL subfamily.</text>
</comment>
<name>GSA_FRATH</name>
<sequence length="431" mass="47064">MENKSNSQILFAEAQQYIPGGVNSPVRAFKSVGQEFPRFIKFAKGAYLYDVDWNKYIDYIGSWGPMILGHCDDDVLEAIQCQVKNGLSYGAPCKQEVDLAKKIIELMPNIEQVRFVNSGTEATISAIRLARAYTCRNKIIKFEGCYHGHADEFLVAAGSGALSLGQPNSPGVPEDVVKDTLVASFNDMESIQALFEKYKDEIACIIVEPIAGNMNMIFPQDGFLAKLRAICDQNSSLLIFDEVMTGFRVALGGAQSIYNVKPDLTTLGKVIGGGMPVGAFGGRKEIMQKVSPAGPVYQAGTLSGNPIAMTAGIKTLEKISQPGFFDELGVKAQKLVDGLNEAAKAYDFNFHAKCLGGMFGLFFCSDKIAVNTFVDLGKTNLKMFNQFFAYMLDNGVYLAPSAYEAGFISIAHSDEDIEKTICLAKKFFQEN</sequence>
<accession>Q2A2U8</accession>
<gene>
    <name evidence="1" type="primary">hemL</name>
    <name type="ordered locus">FTL_1283</name>
</gene>
<protein>
    <recommendedName>
        <fullName evidence="1">Glutamate-1-semialdehyde 2,1-aminomutase</fullName>
        <shortName evidence="1">GSA</shortName>
        <ecNumber evidence="1">5.4.3.8</ecNumber>
    </recommendedName>
    <alternativeName>
        <fullName evidence="1">Glutamate-1-semialdehyde aminotransferase</fullName>
        <shortName evidence="1">GSA-AT</shortName>
    </alternativeName>
</protein>
<reference key="1">
    <citation type="submission" date="2006-03" db="EMBL/GenBank/DDBJ databases">
        <title>Complete genome sequence of Francisella tularensis LVS (Live Vaccine Strain).</title>
        <authorList>
            <person name="Chain P."/>
            <person name="Larimer F."/>
            <person name="Land M."/>
            <person name="Stilwagen S."/>
            <person name="Larsson P."/>
            <person name="Bearden S."/>
            <person name="Chu M."/>
            <person name="Oyston P."/>
            <person name="Forsman M."/>
            <person name="Andersson S."/>
            <person name="Lindler L."/>
            <person name="Titball R."/>
            <person name="Garcia E."/>
        </authorList>
    </citation>
    <scope>NUCLEOTIDE SEQUENCE [LARGE SCALE GENOMIC DNA]</scope>
    <source>
        <strain>LVS</strain>
    </source>
</reference>
<evidence type="ECO:0000255" key="1">
    <source>
        <dbReference type="HAMAP-Rule" id="MF_00375"/>
    </source>
</evidence>
<proteinExistence type="inferred from homology"/>
<organism>
    <name type="scientific">Francisella tularensis subsp. holarctica (strain LVS)</name>
    <dbReference type="NCBI Taxonomy" id="376619"/>
    <lineage>
        <taxon>Bacteria</taxon>
        <taxon>Pseudomonadati</taxon>
        <taxon>Pseudomonadota</taxon>
        <taxon>Gammaproteobacteria</taxon>
        <taxon>Thiotrichales</taxon>
        <taxon>Francisellaceae</taxon>
        <taxon>Francisella</taxon>
    </lineage>
</organism>
<keyword id="KW-0963">Cytoplasm</keyword>
<keyword id="KW-0413">Isomerase</keyword>
<keyword id="KW-0627">Porphyrin biosynthesis</keyword>
<keyword id="KW-0663">Pyridoxal phosphate</keyword>
<keyword id="KW-1185">Reference proteome</keyword>